<sequence>MSKRVLTSVAWPYANGPRHIGHVAGFGVPSDVFARYQRMAGNEVLMVSGTDEHGTPLLVQAEKEGTTVQELADRYNRIIVEDLAGLGLSYDLFTRTTTRNHYAVVQELFTGLYNNGYMVTQTTRGAISPSTGRTLPDRYIEGTCPICGAKDARGDQCDNCGNQLDPEDLIDPRSKINGETPEFIDTEHFMLDLPALAEALTTWLKGRTDWRPNVLKFSLNLLEDIRPRAMSRDIDWGVPIPVEGWQDNNAKKLYVWFDAVVGYLSASIEWAWRIGDPDAWRKWWNDPEALSYYFMGKDNITFHSQIWPAELLGYGGQGSKGGEAGDLADPALNLPTEVVSSEFLTMSGSKFSSSKGVVIYVRDFLKEFGPDALRYFIATAGPETTDTDFTWDEFVRRINSELANEWGNLVNRTVSMAYKNFGEVPTPGPLTAEDEALLAESAKAFDVVGDNINLSRFKAGITEAMRIAGRANQYIAAMEPWKLAKDENQRERLATVLYTALQVVSDVNTLLTPYLPFSAQKIFETLGGEGIWAAQPEVVEVTDESPREPVGVGLPEEGRTYPVIMGDYTKQKVTWARQEIQPGTQLSKPKPLFPKLDPELAETGPEWAPVQK</sequence>
<organism>
    <name type="scientific">Corynebacterium jeikeium (strain K411)</name>
    <dbReference type="NCBI Taxonomy" id="306537"/>
    <lineage>
        <taxon>Bacteria</taxon>
        <taxon>Bacillati</taxon>
        <taxon>Actinomycetota</taxon>
        <taxon>Actinomycetes</taxon>
        <taxon>Mycobacteriales</taxon>
        <taxon>Corynebacteriaceae</taxon>
        <taxon>Corynebacterium</taxon>
    </lineage>
</organism>
<feature type="chain" id="PRO_0000331808" description="Methionine--tRNA ligase">
    <location>
        <begin position="1"/>
        <end position="612"/>
    </location>
</feature>
<feature type="region of interest" description="Disordered" evidence="2">
    <location>
        <begin position="580"/>
        <end position="612"/>
    </location>
</feature>
<feature type="short sequence motif" description="'HIGH' region">
    <location>
        <begin position="12"/>
        <end position="22"/>
    </location>
</feature>
<feature type="short sequence motif" description="'KMSKS' region">
    <location>
        <begin position="350"/>
        <end position="354"/>
    </location>
</feature>
<feature type="binding site" evidence="1">
    <location>
        <position position="144"/>
    </location>
    <ligand>
        <name>Zn(2+)</name>
        <dbReference type="ChEBI" id="CHEBI:29105"/>
    </ligand>
</feature>
<feature type="binding site" evidence="1">
    <location>
        <position position="147"/>
    </location>
    <ligand>
        <name>Zn(2+)</name>
        <dbReference type="ChEBI" id="CHEBI:29105"/>
    </ligand>
</feature>
<feature type="binding site" evidence="1">
    <location>
        <position position="157"/>
    </location>
    <ligand>
        <name>Zn(2+)</name>
        <dbReference type="ChEBI" id="CHEBI:29105"/>
    </ligand>
</feature>
<feature type="binding site" evidence="1">
    <location>
        <position position="160"/>
    </location>
    <ligand>
        <name>Zn(2+)</name>
        <dbReference type="ChEBI" id="CHEBI:29105"/>
    </ligand>
</feature>
<feature type="binding site" evidence="1">
    <location>
        <position position="353"/>
    </location>
    <ligand>
        <name>ATP</name>
        <dbReference type="ChEBI" id="CHEBI:30616"/>
    </ligand>
</feature>
<accession>Q4JU18</accession>
<gene>
    <name evidence="1" type="primary">metG</name>
    <name type="ordered locus">jk1516</name>
</gene>
<evidence type="ECO:0000255" key="1">
    <source>
        <dbReference type="HAMAP-Rule" id="MF_00098"/>
    </source>
</evidence>
<evidence type="ECO:0000256" key="2">
    <source>
        <dbReference type="SAM" id="MobiDB-lite"/>
    </source>
</evidence>
<name>SYM_CORJK</name>
<comment type="function">
    <text evidence="1">Is required not only for elongation of protein synthesis but also for the initiation of all mRNA translation through initiator tRNA(fMet) aminoacylation.</text>
</comment>
<comment type="catalytic activity">
    <reaction evidence="1">
        <text>tRNA(Met) + L-methionine + ATP = L-methionyl-tRNA(Met) + AMP + diphosphate</text>
        <dbReference type="Rhea" id="RHEA:13481"/>
        <dbReference type="Rhea" id="RHEA-COMP:9667"/>
        <dbReference type="Rhea" id="RHEA-COMP:9698"/>
        <dbReference type="ChEBI" id="CHEBI:30616"/>
        <dbReference type="ChEBI" id="CHEBI:33019"/>
        <dbReference type="ChEBI" id="CHEBI:57844"/>
        <dbReference type="ChEBI" id="CHEBI:78442"/>
        <dbReference type="ChEBI" id="CHEBI:78530"/>
        <dbReference type="ChEBI" id="CHEBI:456215"/>
        <dbReference type="EC" id="6.1.1.10"/>
    </reaction>
</comment>
<comment type="cofactor">
    <cofactor evidence="1">
        <name>Zn(2+)</name>
        <dbReference type="ChEBI" id="CHEBI:29105"/>
    </cofactor>
    <text evidence="1">Binds 1 zinc ion per subunit.</text>
</comment>
<comment type="subunit">
    <text evidence="1">Monomer.</text>
</comment>
<comment type="subcellular location">
    <subcellularLocation>
        <location evidence="1">Cytoplasm</location>
    </subcellularLocation>
</comment>
<comment type="similarity">
    <text evidence="1">Belongs to the class-I aminoacyl-tRNA synthetase family. MetG type 1 subfamily.</text>
</comment>
<proteinExistence type="inferred from homology"/>
<keyword id="KW-0030">Aminoacyl-tRNA synthetase</keyword>
<keyword id="KW-0067">ATP-binding</keyword>
<keyword id="KW-0963">Cytoplasm</keyword>
<keyword id="KW-0436">Ligase</keyword>
<keyword id="KW-0479">Metal-binding</keyword>
<keyword id="KW-0547">Nucleotide-binding</keyword>
<keyword id="KW-0648">Protein biosynthesis</keyword>
<keyword id="KW-1185">Reference proteome</keyword>
<keyword id="KW-0862">Zinc</keyword>
<protein>
    <recommendedName>
        <fullName evidence="1">Methionine--tRNA ligase</fullName>
        <ecNumber evidence="1">6.1.1.10</ecNumber>
    </recommendedName>
    <alternativeName>
        <fullName evidence="1">Methionyl-tRNA synthetase</fullName>
        <shortName evidence="1">MetRS</shortName>
    </alternativeName>
</protein>
<reference key="1">
    <citation type="journal article" date="2005" name="J. Bacteriol.">
        <title>Complete genome sequence and analysis of the multiresistant nosocomial pathogen Corynebacterium jeikeium K411, a lipid-requiring bacterium of the human skin flora.</title>
        <authorList>
            <person name="Tauch A."/>
            <person name="Kaiser O."/>
            <person name="Hain T."/>
            <person name="Goesmann A."/>
            <person name="Weisshaar B."/>
            <person name="Albersmeier A."/>
            <person name="Bekel T."/>
            <person name="Bischoff N."/>
            <person name="Brune I."/>
            <person name="Chakraborty T."/>
            <person name="Kalinowski J."/>
            <person name="Meyer F."/>
            <person name="Rupp O."/>
            <person name="Schneiker S."/>
            <person name="Viehoever P."/>
            <person name="Puehler A."/>
        </authorList>
    </citation>
    <scope>NUCLEOTIDE SEQUENCE [LARGE SCALE GENOMIC DNA]</scope>
    <source>
        <strain>K411</strain>
    </source>
</reference>
<dbReference type="EC" id="6.1.1.10" evidence="1"/>
<dbReference type="EMBL" id="CR931997">
    <property type="protein sequence ID" value="CAI37689.1"/>
    <property type="molecule type" value="Genomic_DNA"/>
</dbReference>
<dbReference type="RefSeq" id="WP_011273939.1">
    <property type="nucleotide sequence ID" value="NC_007164.1"/>
</dbReference>
<dbReference type="SMR" id="Q4JU18"/>
<dbReference type="STRING" id="306537.jk1516"/>
<dbReference type="KEGG" id="cjk:jk1516"/>
<dbReference type="PATRIC" id="fig|306537.10.peg.1536"/>
<dbReference type="eggNOG" id="COG0143">
    <property type="taxonomic scope" value="Bacteria"/>
</dbReference>
<dbReference type="HOGENOM" id="CLU_009710_1_2_11"/>
<dbReference type="OrthoDB" id="9810191at2"/>
<dbReference type="Proteomes" id="UP000000545">
    <property type="component" value="Chromosome"/>
</dbReference>
<dbReference type="GO" id="GO:0005829">
    <property type="term" value="C:cytosol"/>
    <property type="evidence" value="ECO:0007669"/>
    <property type="project" value="TreeGrafter"/>
</dbReference>
<dbReference type="GO" id="GO:0005524">
    <property type="term" value="F:ATP binding"/>
    <property type="evidence" value="ECO:0007669"/>
    <property type="project" value="UniProtKB-UniRule"/>
</dbReference>
<dbReference type="GO" id="GO:0046872">
    <property type="term" value="F:metal ion binding"/>
    <property type="evidence" value="ECO:0007669"/>
    <property type="project" value="UniProtKB-KW"/>
</dbReference>
<dbReference type="GO" id="GO:0004825">
    <property type="term" value="F:methionine-tRNA ligase activity"/>
    <property type="evidence" value="ECO:0007669"/>
    <property type="project" value="UniProtKB-UniRule"/>
</dbReference>
<dbReference type="GO" id="GO:0006431">
    <property type="term" value="P:methionyl-tRNA aminoacylation"/>
    <property type="evidence" value="ECO:0007669"/>
    <property type="project" value="UniProtKB-UniRule"/>
</dbReference>
<dbReference type="CDD" id="cd07957">
    <property type="entry name" value="Anticodon_Ia_Met"/>
    <property type="match status" value="1"/>
</dbReference>
<dbReference type="CDD" id="cd00814">
    <property type="entry name" value="MetRS_core"/>
    <property type="match status" value="1"/>
</dbReference>
<dbReference type="FunFam" id="2.20.28.20:FF:000001">
    <property type="entry name" value="Methionine--tRNA ligase"/>
    <property type="match status" value="1"/>
</dbReference>
<dbReference type="Gene3D" id="3.40.50.620">
    <property type="entry name" value="HUPs"/>
    <property type="match status" value="1"/>
</dbReference>
<dbReference type="Gene3D" id="1.10.730.10">
    <property type="entry name" value="Isoleucyl-tRNA Synthetase, Domain 1"/>
    <property type="match status" value="1"/>
</dbReference>
<dbReference type="Gene3D" id="2.20.28.20">
    <property type="entry name" value="Methionyl-tRNA synthetase, Zn-domain"/>
    <property type="match status" value="1"/>
</dbReference>
<dbReference type="HAMAP" id="MF_00098">
    <property type="entry name" value="Met_tRNA_synth_type1"/>
    <property type="match status" value="1"/>
</dbReference>
<dbReference type="InterPro" id="IPR041872">
    <property type="entry name" value="Anticodon_Met"/>
</dbReference>
<dbReference type="InterPro" id="IPR023458">
    <property type="entry name" value="Met-tRNA_ligase_1"/>
</dbReference>
<dbReference type="InterPro" id="IPR014758">
    <property type="entry name" value="Met-tRNA_synth"/>
</dbReference>
<dbReference type="InterPro" id="IPR015413">
    <property type="entry name" value="Methionyl/Leucyl_tRNA_Synth"/>
</dbReference>
<dbReference type="InterPro" id="IPR033911">
    <property type="entry name" value="MetRS_core"/>
</dbReference>
<dbReference type="InterPro" id="IPR029038">
    <property type="entry name" value="MetRS_Zn"/>
</dbReference>
<dbReference type="InterPro" id="IPR014729">
    <property type="entry name" value="Rossmann-like_a/b/a_fold"/>
</dbReference>
<dbReference type="InterPro" id="IPR009080">
    <property type="entry name" value="tRNAsynth_Ia_anticodon-bd"/>
</dbReference>
<dbReference type="NCBIfam" id="TIGR00398">
    <property type="entry name" value="metG"/>
    <property type="match status" value="1"/>
</dbReference>
<dbReference type="PANTHER" id="PTHR45765">
    <property type="entry name" value="METHIONINE--TRNA LIGASE"/>
    <property type="match status" value="1"/>
</dbReference>
<dbReference type="PANTHER" id="PTHR45765:SF1">
    <property type="entry name" value="METHIONINE--TRNA LIGASE, CYTOPLASMIC"/>
    <property type="match status" value="1"/>
</dbReference>
<dbReference type="Pfam" id="PF19303">
    <property type="entry name" value="Anticodon_3"/>
    <property type="match status" value="1"/>
</dbReference>
<dbReference type="Pfam" id="PF09334">
    <property type="entry name" value="tRNA-synt_1g"/>
    <property type="match status" value="1"/>
</dbReference>
<dbReference type="PRINTS" id="PR01041">
    <property type="entry name" value="TRNASYNTHMET"/>
</dbReference>
<dbReference type="SUPFAM" id="SSF47323">
    <property type="entry name" value="Anticodon-binding domain of a subclass of class I aminoacyl-tRNA synthetases"/>
    <property type="match status" value="1"/>
</dbReference>
<dbReference type="SUPFAM" id="SSF57770">
    <property type="entry name" value="Methionyl-tRNA synthetase (MetRS), Zn-domain"/>
    <property type="match status" value="1"/>
</dbReference>
<dbReference type="SUPFAM" id="SSF52374">
    <property type="entry name" value="Nucleotidylyl transferase"/>
    <property type="match status" value="1"/>
</dbReference>